<protein>
    <recommendedName>
        <fullName>Laccase-10</fullName>
        <ecNumber>1.10.3.2</ecNumber>
    </recommendedName>
    <alternativeName>
        <fullName>Benzenediol:oxygen oxidoreductase 10</fullName>
    </alternativeName>
    <alternativeName>
        <fullName>Diphenol oxidase 10</fullName>
    </alternativeName>
    <alternativeName>
        <fullName>Urishiol oxidase 10</fullName>
    </alternativeName>
</protein>
<gene>
    <name type="primary">LAC10</name>
    <name type="ordered locus">At5g01190</name>
    <name type="ORF">F7J8.170</name>
</gene>
<accession>Q6ID18</accession>
<accession>Q9LFB7</accession>
<comment type="function">
    <text evidence="1">Lignin degradation and detoxification of lignin-derived products.</text>
</comment>
<comment type="catalytic activity">
    <reaction>
        <text>4 hydroquinone + O2 = 4 benzosemiquinone + 2 H2O</text>
        <dbReference type="Rhea" id="RHEA:11276"/>
        <dbReference type="ChEBI" id="CHEBI:15377"/>
        <dbReference type="ChEBI" id="CHEBI:15379"/>
        <dbReference type="ChEBI" id="CHEBI:17594"/>
        <dbReference type="ChEBI" id="CHEBI:17977"/>
        <dbReference type="EC" id="1.10.3.2"/>
    </reaction>
</comment>
<comment type="cofactor">
    <cofactor evidence="1">
        <name>Cu cation</name>
        <dbReference type="ChEBI" id="CHEBI:23378"/>
    </cofactor>
    <text evidence="1">Binds 4 Cu cations per monomer.</text>
</comment>
<comment type="subcellular location">
    <subcellularLocation>
        <location evidence="4">Secreted</location>
        <location evidence="4">Extracellular space</location>
        <location evidence="4">Apoplast</location>
    </subcellularLocation>
</comment>
<comment type="tissue specificity">
    <text evidence="3">Ubiquitous, with lower levels in siliques.</text>
</comment>
<comment type="similarity">
    <text evidence="4">Belongs to the multicopper oxidase family.</text>
</comment>
<comment type="sequence caution" evidence="4">
    <conflict type="erroneous gene model prediction">
        <sequence resource="EMBL-CDS" id="CAB69847"/>
    </conflict>
</comment>
<feature type="signal peptide" evidence="2">
    <location>
        <begin position="1"/>
        <end position="22"/>
    </location>
</feature>
<feature type="chain" id="PRO_0000283638" description="Laccase-10">
    <location>
        <begin position="23"/>
        <end position="558"/>
    </location>
</feature>
<feature type="domain" description="Plastocyanin-like 1">
    <location>
        <begin position="30"/>
        <end position="146"/>
    </location>
</feature>
<feature type="domain" description="Plastocyanin-like 2">
    <location>
        <begin position="157"/>
        <end position="308"/>
    </location>
</feature>
<feature type="domain" description="Plastocyanin-like 3">
    <location>
        <begin position="408"/>
        <end position="542"/>
    </location>
</feature>
<feature type="binding site" description="type 2 copper site" evidence="1">
    <location>
        <position position="80"/>
    </location>
    <ligand>
        <name>Cu cation</name>
        <dbReference type="ChEBI" id="CHEBI:23378"/>
        <label>1</label>
    </ligand>
</feature>
<feature type="binding site" description="type 3 copper site" evidence="1">
    <location>
        <position position="82"/>
    </location>
    <ligand>
        <name>Cu cation</name>
        <dbReference type="ChEBI" id="CHEBI:23378"/>
        <label>2</label>
    </ligand>
</feature>
<feature type="binding site" description="type 3 copper site" evidence="1">
    <location>
        <position position="125"/>
    </location>
    <ligand>
        <name>Cu cation</name>
        <dbReference type="ChEBI" id="CHEBI:23378"/>
        <label>2</label>
    </ligand>
</feature>
<feature type="binding site" description="type 3 copper site" evidence="1">
    <location>
        <position position="127"/>
    </location>
    <ligand>
        <name>Cu cation</name>
        <dbReference type="ChEBI" id="CHEBI:23378"/>
        <label>3</label>
    </ligand>
</feature>
<feature type="binding site" description="type 1 copper site" evidence="1">
    <location>
        <position position="459"/>
    </location>
    <ligand>
        <name>Cu cation</name>
        <dbReference type="ChEBI" id="CHEBI:23378"/>
        <label>4</label>
    </ligand>
</feature>
<feature type="binding site" description="type 2 copper site" evidence="1">
    <location>
        <position position="462"/>
    </location>
    <ligand>
        <name>Cu cation</name>
        <dbReference type="ChEBI" id="CHEBI:23378"/>
        <label>1</label>
    </ligand>
</feature>
<feature type="binding site" description="type 3 copper site" evidence="1">
    <location>
        <position position="464"/>
    </location>
    <ligand>
        <name>Cu cation</name>
        <dbReference type="ChEBI" id="CHEBI:23378"/>
        <label>3</label>
    </ligand>
</feature>
<feature type="binding site" description="type 3 copper site" evidence="1">
    <location>
        <position position="521"/>
    </location>
    <ligand>
        <name>Cu cation</name>
        <dbReference type="ChEBI" id="CHEBI:23378"/>
        <label>3</label>
    </ligand>
</feature>
<feature type="binding site" description="type 1 copper site" evidence="1">
    <location>
        <position position="522"/>
    </location>
    <ligand>
        <name>Cu cation</name>
        <dbReference type="ChEBI" id="CHEBI:23378"/>
        <label>4</label>
    </ligand>
</feature>
<feature type="binding site" description="type 3 copper site" evidence="1">
    <location>
        <position position="523"/>
    </location>
    <ligand>
        <name>Cu cation</name>
        <dbReference type="ChEBI" id="CHEBI:23378"/>
        <label>2</label>
    </ligand>
</feature>
<feature type="binding site" description="type 1 copper site" evidence="1">
    <location>
        <position position="527"/>
    </location>
    <ligand>
        <name>Cu cation</name>
        <dbReference type="ChEBI" id="CHEBI:23378"/>
        <label>4</label>
    </ligand>
</feature>
<feature type="glycosylation site" description="N-linked (GlcNAc...) asparagine" evidence="2">
    <location>
        <position position="76"/>
    </location>
</feature>
<feature type="glycosylation site" description="N-linked (GlcNAc...) asparagine" evidence="2">
    <location>
        <position position="112"/>
    </location>
</feature>
<feature type="glycosylation site" description="N-linked (GlcNAc...) asparagine" evidence="2">
    <location>
        <position position="185"/>
    </location>
</feature>
<feature type="glycosylation site" description="N-linked (GlcNAc...) asparagine" evidence="2">
    <location>
        <position position="296"/>
    </location>
</feature>
<feature type="glycosylation site" description="N-linked (GlcNAc...) asparagine" evidence="2">
    <location>
        <position position="323"/>
    </location>
</feature>
<feature type="glycosylation site" description="N-linked (GlcNAc...) asparagine" evidence="2">
    <location>
        <position position="373"/>
    </location>
</feature>
<feature type="glycosylation site" description="N-linked (GlcNAc...) asparagine" evidence="2">
    <location>
        <position position="383"/>
    </location>
</feature>
<feature type="glycosylation site" description="N-linked (GlcNAc...) asparagine" evidence="2">
    <location>
        <position position="400"/>
    </location>
</feature>
<feature type="glycosylation site" description="N-linked (GlcNAc...) asparagine" evidence="2">
    <location>
        <position position="441"/>
    </location>
</feature>
<feature type="glycosylation site" description="N-linked (GlcNAc...) asparagine" evidence="2">
    <location>
        <position position="545"/>
    </location>
</feature>
<name>LAC10_ARATH</name>
<organism>
    <name type="scientific">Arabidopsis thaliana</name>
    <name type="common">Mouse-ear cress</name>
    <dbReference type="NCBI Taxonomy" id="3702"/>
    <lineage>
        <taxon>Eukaryota</taxon>
        <taxon>Viridiplantae</taxon>
        <taxon>Streptophyta</taxon>
        <taxon>Embryophyta</taxon>
        <taxon>Tracheophyta</taxon>
        <taxon>Spermatophyta</taxon>
        <taxon>Magnoliopsida</taxon>
        <taxon>eudicotyledons</taxon>
        <taxon>Gunneridae</taxon>
        <taxon>Pentapetalae</taxon>
        <taxon>rosids</taxon>
        <taxon>malvids</taxon>
        <taxon>Brassicales</taxon>
        <taxon>Brassicaceae</taxon>
        <taxon>Camelineae</taxon>
        <taxon>Arabidopsis</taxon>
    </lineage>
</organism>
<reference key="1">
    <citation type="journal article" date="2000" name="Nature">
        <title>Sequence and analysis of chromosome 5 of the plant Arabidopsis thaliana.</title>
        <authorList>
            <person name="Tabata S."/>
            <person name="Kaneko T."/>
            <person name="Nakamura Y."/>
            <person name="Kotani H."/>
            <person name="Kato T."/>
            <person name="Asamizu E."/>
            <person name="Miyajima N."/>
            <person name="Sasamoto S."/>
            <person name="Kimura T."/>
            <person name="Hosouchi T."/>
            <person name="Kawashima K."/>
            <person name="Kohara M."/>
            <person name="Matsumoto M."/>
            <person name="Matsuno A."/>
            <person name="Muraki A."/>
            <person name="Nakayama S."/>
            <person name="Nakazaki N."/>
            <person name="Naruo K."/>
            <person name="Okumura S."/>
            <person name="Shinpo S."/>
            <person name="Takeuchi C."/>
            <person name="Wada T."/>
            <person name="Watanabe A."/>
            <person name="Yamada M."/>
            <person name="Yasuda M."/>
            <person name="Sato S."/>
            <person name="de la Bastide M."/>
            <person name="Huang E."/>
            <person name="Spiegel L."/>
            <person name="Gnoj L."/>
            <person name="O'Shaughnessy A."/>
            <person name="Preston R."/>
            <person name="Habermann K."/>
            <person name="Murray J."/>
            <person name="Johnson D."/>
            <person name="Rohlfing T."/>
            <person name="Nelson J."/>
            <person name="Stoneking T."/>
            <person name="Pepin K."/>
            <person name="Spieth J."/>
            <person name="Sekhon M."/>
            <person name="Armstrong J."/>
            <person name="Becker M."/>
            <person name="Belter E."/>
            <person name="Cordum H."/>
            <person name="Cordes M."/>
            <person name="Courtney L."/>
            <person name="Courtney W."/>
            <person name="Dante M."/>
            <person name="Du H."/>
            <person name="Edwards J."/>
            <person name="Fryman J."/>
            <person name="Haakensen B."/>
            <person name="Lamar E."/>
            <person name="Latreille P."/>
            <person name="Leonard S."/>
            <person name="Meyer R."/>
            <person name="Mulvaney E."/>
            <person name="Ozersky P."/>
            <person name="Riley A."/>
            <person name="Strowmatt C."/>
            <person name="Wagner-McPherson C."/>
            <person name="Wollam A."/>
            <person name="Yoakum M."/>
            <person name="Bell M."/>
            <person name="Dedhia N."/>
            <person name="Parnell L."/>
            <person name="Shah R."/>
            <person name="Rodriguez M."/>
            <person name="Hoon See L."/>
            <person name="Vil D."/>
            <person name="Baker J."/>
            <person name="Kirchoff K."/>
            <person name="Toth K."/>
            <person name="King L."/>
            <person name="Bahret A."/>
            <person name="Miller B."/>
            <person name="Marra M.A."/>
            <person name="Martienssen R."/>
            <person name="McCombie W.R."/>
            <person name="Wilson R.K."/>
            <person name="Murphy G."/>
            <person name="Bancroft I."/>
            <person name="Volckaert G."/>
            <person name="Wambutt R."/>
            <person name="Duesterhoeft A."/>
            <person name="Stiekema W."/>
            <person name="Pohl T."/>
            <person name="Entian K.-D."/>
            <person name="Terryn N."/>
            <person name="Hartley N."/>
            <person name="Bent E."/>
            <person name="Johnson S."/>
            <person name="Langham S.-A."/>
            <person name="McCullagh B."/>
            <person name="Robben J."/>
            <person name="Grymonprez B."/>
            <person name="Zimmermann W."/>
            <person name="Ramsperger U."/>
            <person name="Wedler H."/>
            <person name="Balke K."/>
            <person name="Wedler E."/>
            <person name="Peters S."/>
            <person name="van Staveren M."/>
            <person name="Dirkse W."/>
            <person name="Mooijman P."/>
            <person name="Klein Lankhorst R."/>
            <person name="Weitzenegger T."/>
            <person name="Bothe G."/>
            <person name="Rose M."/>
            <person name="Hauf J."/>
            <person name="Berneiser S."/>
            <person name="Hempel S."/>
            <person name="Feldpausch M."/>
            <person name="Lamberth S."/>
            <person name="Villarroel R."/>
            <person name="Gielen J."/>
            <person name="Ardiles W."/>
            <person name="Bents O."/>
            <person name="Lemcke K."/>
            <person name="Kolesov G."/>
            <person name="Mayer K.F.X."/>
            <person name="Rudd S."/>
            <person name="Schoof H."/>
            <person name="Schueller C."/>
            <person name="Zaccaria P."/>
            <person name="Mewes H.-W."/>
            <person name="Bevan M."/>
            <person name="Fransz P.F."/>
        </authorList>
    </citation>
    <scope>NUCLEOTIDE SEQUENCE [LARGE SCALE GENOMIC DNA]</scope>
    <source>
        <strain>cv. Columbia</strain>
    </source>
</reference>
<reference key="2">
    <citation type="journal article" date="2017" name="Plant J.">
        <title>Araport11: a complete reannotation of the Arabidopsis thaliana reference genome.</title>
        <authorList>
            <person name="Cheng C.Y."/>
            <person name="Krishnakumar V."/>
            <person name="Chan A.P."/>
            <person name="Thibaud-Nissen F."/>
            <person name="Schobel S."/>
            <person name="Town C.D."/>
        </authorList>
    </citation>
    <scope>GENOME REANNOTATION</scope>
    <source>
        <strain>cv. Columbia</strain>
    </source>
</reference>
<reference key="3">
    <citation type="submission" date="2004-06" db="EMBL/GenBank/DDBJ databases">
        <title>Arabidopsis ORF clones.</title>
        <authorList>
            <person name="Cheuk R.F."/>
            <person name="Chen H."/>
            <person name="Kim C.J."/>
            <person name="Shinn P."/>
            <person name="Ecker J.R."/>
        </authorList>
    </citation>
    <scope>NUCLEOTIDE SEQUENCE [LARGE SCALE MRNA]</scope>
    <source>
        <strain>cv. Columbia</strain>
    </source>
</reference>
<reference key="4">
    <citation type="journal article" date="2006" name="J. Exp. Bot.">
        <title>Mutant identification and characterization of the laccase gene family in Arabidopsis.</title>
        <authorList>
            <person name="Cai X."/>
            <person name="Davis E.J."/>
            <person name="Ballif J."/>
            <person name="Liang M."/>
            <person name="Bushman E."/>
            <person name="Haroldsen V."/>
            <person name="Torabinejad J."/>
            <person name="Wu Y."/>
        </authorList>
    </citation>
    <scope>TISSUE SPECIFICITY</scope>
</reference>
<proteinExistence type="evidence at transcript level"/>
<dbReference type="EC" id="1.10.3.2"/>
<dbReference type="EMBL" id="AL137189">
    <property type="protein sequence ID" value="CAB69847.1"/>
    <property type="status" value="ALT_SEQ"/>
    <property type="molecule type" value="Genomic_DNA"/>
</dbReference>
<dbReference type="EMBL" id="CP002688">
    <property type="protein sequence ID" value="AED90308.1"/>
    <property type="molecule type" value="Genomic_DNA"/>
</dbReference>
<dbReference type="EMBL" id="BT014855">
    <property type="protein sequence ID" value="AAT41838.1"/>
    <property type="molecule type" value="mRNA"/>
</dbReference>
<dbReference type="PIR" id="T45959">
    <property type="entry name" value="T45959"/>
</dbReference>
<dbReference type="RefSeq" id="NP_195739.2">
    <property type="nucleotide sequence ID" value="NM_120197.4"/>
</dbReference>
<dbReference type="SMR" id="Q6ID18"/>
<dbReference type="FunCoup" id="Q6ID18">
    <property type="interactions" value="8"/>
</dbReference>
<dbReference type="STRING" id="3702.Q6ID18"/>
<dbReference type="GlyCosmos" id="Q6ID18">
    <property type="glycosylation" value="10 sites, No reported glycans"/>
</dbReference>
<dbReference type="GlyGen" id="Q6ID18">
    <property type="glycosylation" value="10 sites"/>
</dbReference>
<dbReference type="PaxDb" id="3702-AT5G01190.1"/>
<dbReference type="ProteomicsDB" id="238405"/>
<dbReference type="EnsemblPlants" id="AT5G01190.1">
    <property type="protein sequence ID" value="AT5G01190.1"/>
    <property type="gene ID" value="AT5G01190"/>
</dbReference>
<dbReference type="GeneID" id="831697"/>
<dbReference type="Gramene" id="AT5G01190.1">
    <property type="protein sequence ID" value="AT5G01190.1"/>
    <property type="gene ID" value="AT5G01190"/>
</dbReference>
<dbReference type="KEGG" id="ath:AT5G01190"/>
<dbReference type="Araport" id="AT5G01190"/>
<dbReference type="TAIR" id="AT5G01190">
    <property type="gene designation" value="LAC10"/>
</dbReference>
<dbReference type="eggNOG" id="KOG1263">
    <property type="taxonomic scope" value="Eukaryota"/>
</dbReference>
<dbReference type="HOGENOM" id="CLU_006504_6_3_1"/>
<dbReference type="InParanoid" id="Q6ID18"/>
<dbReference type="PhylomeDB" id="Q6ID18"/>
<dbReference type="BioCyc" id="ARA:AT5G01190-MONOMER"/>
<dbReference type="PRO" id="PR:Q6ID18"/>
<dbReference type="Proteomes" id="UP000006548">
    <property type="component" value="Chromosome 5"/>
</dbReference>
<dbReference type="ExpressionAtlas" id="Q6ID18">
    <property type="expression patterns" value="baseline and differential"/>
</dbReference>
<dbReference type="GO" id="GO:0048046">
    <property type="term" value="C:apoplast"/>
    <property type="evidence" value="ECO:0007669"/>
    <property type="project" value="UniProtKB-SubCell"/>
</dbReference>
<dbReference type="GO" id="GO:0009505">
    <property type="term" value="C:plant-type cell wall"/>
    <property type="evidence" value="ECO:0000314"/>
    <property type="project" value="TAIR"/>
</dbReference>
<dbReference type="GO" id="GO:0005507">
    <property type="term" value="F:copper ion binding"/>
    <property type="evidence" value="ECO:0007669"/>
    <property type="project" value="InterPro"/>
</dbReference>
<dbReference type="GO" id="GO:0052716">
    <property type="term" value="F:hydroquinone:oxygen oxidoreductase activity"/>
    <property type="evidence" value="ECO:0007669"/>
    <property type="project" value="UniProtKB-EC"/>
</dbReference>
<dbReference type="GO" id="GO:0046274">
    <property type="term" value="P:lignin catabolic process"/>
    <property type="evidence" value="ECO:0007669"/>
    <property type="project" value="UniProtKB-KW"/>
</dbReference>
<dbReference type="CDD" id="cd13849">
    <property type="entry name" value="CuRO_1_LCC_plant"/>
    <property type="match status" value="1"/>
</dbReference>
<dbReference type="CDD" id="cd13875">
    <property type="entry name" value="CuRO_2_LCC_plant"/>
    <property type="match status" value="1"/>
</dbReference>
<dbReference type="CDD" id="cd13897">
    <property type="entry name" value="CuRO_3_LCC_plant"/>
    <property type="match status" value="1"/>
</dbReference>
<dbReference type="FunFam" id="2.60.40.420:FF:000049">
    <property type="entry name" value="Laccase"/>
    <property type="match status" value="1"/>
</dbReference>
<dbReference type="FunFam" id="2.60.40.420:FF:000062">
    <property type="entry name" value="Laccase"/>
    <property type="match status" value="1"/>
</dbReference>
<dbReference type="Gene3D" id="2.60.40.420">
    <property type="entry name" value="Cupredoxins - blue copper proteins"/>
    <property type="match status" value="3"/>
</dbReference>
<dbReference type="InterPro" id="IPR011707">
    <property type="entry name" value="Cu-oxidase-like_N"/>
</dbReference>
<dbReference type="InterPro" id="IPR001117">
    <property type="entry name" value="Cu-oxidase_2nd"/>
</dbReference>
<dbReference type="InterPro" id="IPR011706">
    <property type="entry name" value="Cu-oxidase_C"/>
</dbReference>
<dbReference type="InterPro" id="IPR045087">
    <property type="entry name" value="Cu-oxidase_fam"/>
</dbReference>
<dbReference type="InterPro" id="IPR033138">
    <property type="entry name" value="Cu_oxidase_CS"/>
</dbReference>
<dbReference type="InterPro" id="IPR002355">
    <property type="entry name" value="Cu_oxidase_Cu_BS"/>
</dbReference>
<dbReference type="InterPro" id="IPR008972">
    <property type="entry name" value="Cupredoxin"/>
</dbReference>
<dbReference type="InterPro" id="IPR034288">
    <property type="entry name" value="CuRO_1_LCC"/>
</dbReference>
<dbReference type="InterPro" id="IPR034285">
    <property type="entry name" value="CuRO_2_LCC"/>
</dbReference>
<dbReference type="InterPro" id="IPR034289">
    <property type="entry name" value="CuRO_3_LCC"/>
</dbReference>
<dbReference type="InterPro" id="IPR017761">
    <property type="entry name" value="Laccase"/>
</dbReference>
<dbReference type="NCBIfam" id="TIGR03389">
    <property type="entry name" value="laccase"/>
    <property type="match status" value="1"/>
</dbReference>
<dbReference type="PANTHER" id="PTHR11709:SF289">
    <property type="entry name" value="LACCASE-10"/>
    <property type="match status" value="1"/>
</dbReference>
<dbReference type="PANTHER" id="PTHR11709">
    <property type="entry name" value="MULTI-COPPER OXIDASE"/>
    <property type="match status" value="1"/>
</dbReference>
<dbReference type="Pfam" id="PF00394">
    <property type="entry name" value="Cu-oxidase"/>
    <property type="match status" value="1"/>
</dbReference>
<dbReference type="Pfam" id="PF07731">
    <property type="entry name" value="Cu-oxidase_2"/>
    <property type="match status" value="1"/>
</dbReference>
<dbReference type="Pfam" id="PF07732">
    <property type="entry name" value="Cu-oxidase_3"/>
    <property type="match status" value="1"/>
</dbReference>
<dbReference type="SUPFAM" id="SSF49503">
    <property type="entry name" value="Cupredoxins"/>
    <property type="match status" value="3"/>
</dbReference>
<dbReference type="PROSITE" id="PS00079">
    <property type="entry name" value="MULTICOPPER_OXIDASE1"/>
    <property type="match status" value="1"/>
</dbReference>
<dbReference type="PROSITE" id="PS00080">
    <property type="entry name" value="MULTICOPPER_OXIDASE2"/>
    <property type="match status" value="1"/>
</dbReference>
<sequence length="558" mass="61298">MVFPIRILVLFALLAFPACVHGAIRKYTFNVVTKQVTRICSTKQIVTVNGKFPGPTIYANEDDTILVNVVNNVKYNVSIHWHGIRQLRTGWADGPAYITQCPIKPGHSYVYNFTVTGQRGTLWWHAHVLWLRATVHGAIVILPKLGLPYPFPKPHREEVIILGEWWKSDTETVVNEALKSGLAPNVSDAHVINGHPGFVPNCPSQGNFKLAVESGKTYMLRLINAALNEELFFKIAGHRFTVVEVDAVYVKPFNTDTILIAPGQTTTALVSAARPSGQYLIAAAPFQDSAVVAVDNRTATATVHYSGTLSATPTKTTSPPPQNATSVANTFVNSLRSLNSKTYPANVPITVDHDLLFTVGLGINRCHSCKAGNFSRVVAAINNITFKMPKTALLQAHYFNLTGIYTTDFPAKPRRVFDFTGKPPSNLATMKATKLYKLPYNSTVQVVLQDTGNVAPENHPIHLHGFNFFVVGLGTGNYNSKKDSNKFNLVDPVERNTVGVPSGGWAAIRFRADNPGVWFMHCHLEVHTTWGLKMAFLVENGKGPNQSIRPPPSDLPKC</sequence>
<keyword id="KW-0052">Apoplast</keyword>
<keyword id="KW-0186">Copper</keyword>
<keyword id="KW-0325">Glycoprotein</keyword>
<keyword id="KW-0439">Lignin degradation</keyword>
<keyword id="KW-0479">Metal-binding</keyword>
<keyword id="KW-0560">Oxidoreductase</keyword>
<keyword id="KW-1185">Reference proteome</keyword>
<keyword id="KW-0677">Repeat</keyword>
<keyword id="KW-0964">Secreted</keyword>
<keyword id="KW-0732">Signal</keyword>
<evidence type="ECO:0000250" key="1"/>
<evidence type="ECO:0000255" key="2"/>
<evidence type="ECO:0000269" key="3">
    <source>
    </source>
</evidence>
<evidence type="ECO:0000305" key="4"/>